<gene>
    <name evidence="1" type="primary">xylA</name>
</gene>
<protein>
    <recommendedName>
        <fullName evidence="1">Xylose isomerase</fullName>
        <ecNumber evidence="1">5.3.1.5</ecNumber>
    </recommendedName>
</protein>
<dbReference type="EC" id="5.3.1.5" evidence="1"/>
<dbReference type="EMBL" id="AB038265">
    <property type="protein sequence ID" value="BAB62014.1"/>
    <property type="molecule type" value="Genomic_DNA"/>
</dbReference>
<dbReference type="PIR" id="JC7663">
    <property type="entry name" value="JC7663"/>
</dbReference>
<dbReference type="SMR" id="Q93RJ9"/>
<dbReference type="GO" id="GO:0005737">
    <property type="term" value="C:cytoplasm"/>
    <property type="evidence" value="ECO:0007669"/>
    <property type="project" value="UniProtKB-SubCell"/>
</dbReference>
<dbReference type="GO" id="GO:0000287">
    <property type="term" value="F:magnesium ion binding"/>
    <property type="evidence" value="ECO:0007669"/>
    <property type="project" value="UniProtKB-UniRule"/>
</dbReference>
<dbReference type="GO" id="GO:0009045">
    <property type="term" value="F:xylose isomerase activity"/>
    <property type="evidence" value="ECO:0007669"/>
    <property type="project" value="UniProtKB-UniRule"/>
</dbReference>
<dbReference type="GO" id="GO:0042732">
    <property type="term" value="P:D-xylose metabolic process"/>
    <property type="evidence" value="ECO:0007669"/>
    <property type="project" value="UniProtKB-UniRule"/>
</dbReference>
<dbReference type="FunFam" id="3.20.20.150:FF:000009">
    <property type="entry name" value="Xylose isomerase"/>
    <property type="match status" value="1"/>
</dbReference>
<dbReference type="Gene3D" id="3.20.20.150">
    <property type="entry name" value="Divalent-metal-dependent TIM barrel enzymes"/>
    <property type="match status" value="1"/>
</dbReference>
<dbReference type="HAMAP" id="MF_00455">
    <property type="entry name" value="Xylose_isom_A"/>
    <property type="match status" value="1"/>
</dbReference>
<dbReference type="InterPro" id="IPR036237">
    <property type="entry name" value="Xyl_isomerase-like_sf"/>
</dbReference>
<dbReference type="InterPro" id="IPR013022">
    <property type="entry name" value="Xyl_isomerase-like_TIM-brl"/>
</dbReference>
<dbReference type="InterPro" id="IPR013453">
    <property type="entry name" value="XylA_actinobac"/>
</dbReference>
<dbReference type="InterPro" id="IPR001998">
    <property type="entry name" value="Xylose_isomerase"/>
</dbReference>
<dbReference type="NCBIfam" id="TIGR02631">
    <property type="entry name" value="xylA_Arthro"/>
    <property type="match status" value="1"/>
</dbReference>
<dbReference type="PANTHER" id="PTHR48408">
    <property type="match status" value="1"/>
</dbReference>
<dbReference type="PANTHER" id="PTHR48408:SF1">
    <property type="entry name" value="XYLOSE ISOMERASE"/>
    <property type="match status" value="1"/>
</dbReference>
<dbReference type="Pfam" id="PF01261">
    <property type="entry name" value="AP_endonuc_2"/>
    <property type="match status" value="1"/>
</dbReference>
<dbReference type="PRINTS" id="PR00688">
    <property type="entry name" value="XYLOSISMRASE"/>
</dbReference>
<dbReference type="SUPFAM" id="SSF51658">
    <property type="entry name" value="Xylose isomerase-like"/>
    <property type="match status" value="1"/>
</dbReference>
<dbReference type="PROSITE" id="PS51415">
    <property type="entry name" value="XYLOSE_ISOMERASE"/>
    <property type="match status" value="1"/>
</dbReference>
<feature type="chain" id="PRO_0000195802" description="Xylose isomerase">
    <location>
        <begin position="1"/>
        <end position="388"/>
    </location>
</feature>
<feature type="active site" evidence="1">
    <location>
        <position position="54"/>
    </location>
</feature>
<feature type="active site" evidence="1">
    <location>
        <position position="57"/>
    </location>
</feature>
<feature type="binding site" evidence="1">
    <location>
        <position position="181"/>
    </location>
    <ligand>
        <name>Mg(2+)</name>
        <dbReference type="ChEBI" id="CHEBI:18420"/>
        <label>1</label>
    </ligand>
</feature>
<feature type="binding site" evidence="1">
    <location>
        <position position="217"/>
    </location>
    <ligand>
        <name>Mg(2+)</name>
        <dbReference type="ChEBI" id="CHEBI:18420"/>
        <label>1</label>
    </ligand>
</feature>
<feature type="binding site" evidence="1">
    <location>
        <position position="217"/>
    </location>
    <ligand>
        <name>Mg(2+)</name>
        <dbReference type="ChEBI" id="CHEBI:18420"/>
        <label>2</label>
    </ligand>
</feature>
<feature type="binding site" evidence="1">
    <location>
        <position position="220"/>
    </location>
    <ligand>
        <name>Mg(2+)</name>
        <dbReference type="ChEBI" id="CHEBI:18420"/>
        <label>2</label>
    </ligand>
</feature>
<feature type="binding site" evidence="1">
    <location>
        <position position="245"/>
    </location>
    <ligand>
        <name>Mg(2+)</name>
        <dbReference type="ChEBI" id="CHEBI:18420"/>
        <label>1</label>
    </ligand>
</feature>
<feature type="binding site" evidence="1">
    <location>
        <position position="255"/>
    </location>
    <ligand>
        <name>Mg(2+)</name>
        <dbReference type="ChEBI" id="CHEBI:18420"/>
        <label>2</label>
    </ligand>
</feature>
<feature type="binding site" evidence="1">
    <location>
        <position position="257"/>
    </location>
    <ligand>
        <name>Mg(2+)</name>
        <dbReference type="ChEBI" id="CHEBI:18420"/>
        <label>2</label>
    </ligand>
</feature>
<feature type="binding site" evidence="1">
    <location>
        <position position="287"/>
    </location>
    <ligand>
        <name>Mg(2+)</name>
        <dbReference type="ChEBI" id="CHEBI:18420"/>
        <label>1</label>
    </ligand>
</feature>
<organism>
    <name type="scientific">Streptomyces olivaceoviridis</name>
    <name type="common">Streptomyces corchorusii</name>
    <dbReference type="NCBI Taxonomy" id="1921"/>
    <lineage>
        <taxon>Bacteria</taxon>
        <taxon>Bacillati</taxon>
        <taxon>Actinomycetota</taxon>
        <taxon>Actinomycetes</taxon>
        <taxon>Kitasatosporales</taxon>
        <taxon>Streptomycetaceae</taxon>
        <taxon>Streptomyces</taxon>
    </lineage>
</organism>
<name>XYLA_STROI</name>
<comment type="catalytic activity">
    <reaction evidence="1">
        <text>alpha-D-xylose = alpha-D-xylulofuranose</text>
        <dbReference type="Rhea" id="RHEA:22816"/>
        <dbReference type="ChEBI" id="CHEBI:28518"/>
        <dbReference type="ChEBI" id="CHEBI:188998"/>
        <dbReference type="EC" id="5.3.1.5"/>
    </reaction>
</comment>
<comment type="cofactor">
    <cofactor evidence="1">
        <name>Mg(2+)</name>
        <dbReference type="ChEBI" id="CHEBI:18420"/>
    </cofactor>
    <text evidence="1">Binds 2 magnesium ions per subunit.</text>
</comment>
<comment type="subunit">
    <text evidence="1">Homotetramer.</text>
</comment>
<comment type="subcellular location">
    <subcellularLocation>
        <location evidence="1">Cytoplasm</location>
    </subcellularLocation>
</comment>
<comment type="similarity">
    <text evidence="1">Belongs to the xylose isomerase family.</text>
</comment>
<keyword id="KW-0119">Carbohydrate metabolism</keyword>
<keyword id="KW-0963">Cytoplasm</keyword>
<keyword id="KW-0413">Isomerase</keyword>
<keyword id="KW-0460">Magnesium</keyword>
<keyword id="KW-0479">Metal-binding</keyword>
<keyword id="KW-0859">Xylose metabolism</keyword>
<reference key="1">
    <citation type="submission" date="2000-02" db="EMBL/GenBank/DDBJ databases">
        <title>Streptomyces olivaceoviridis D-xylose isomerase (xylA) gene.</title>
        <authorList>
            <person name="Kaneko T."/>
        </authorList>
    </citation>
    <scope>NUCLEOTIDE SEQUENCE [GENOMIC DNA]</scope>
</reference>
<accession>Q93RJ9</accession>
<evidence type="ECO:0000255" key="1">
    <source>
        <dbReference type="HAMAP-Rule" id="MF_00455"/>
    </source>
</evidence>
<proteinExistence type="inferred from homology"/>
<sequence length="388" mass="42993">MSYQPTPEDRFTFGLWTVGWQGRDPFGDATRRALDPVETVQRLAELGAHGVTFHDDDLIPFGSSDTERESHIKRFRQALDATGMTVPMATTNLFTHPVFKDGAFTANDRDVRRYALRKTIRNIDLAAELGAKTYVAWGGREGAESGAAKDVRSALDRMKEAFDLLGEYVTSQGYVLRFAIEPKPNEPRGDILLPTVGHALAFIERLERPELYGVNPEVGHEQMAGLNFPHGIAQALWAGKLFHIDLNGQSGIKYDQDLRFGAGDLRSALWMVDLLESAGYEGPRHFDFKPPRTEDLDGVWASAAGCMRNYLILKERAAAFRADPEVQEALRASRLDQLAQPTAADGLEDLLADRAAFEDFDVEAAAARGMAFERLDQLAMDHLLGARG</sequence>